<evidence type="ECO:0000255" key="1">
    <source>
        <dbReference type="HAMAP-Rule" id="MF_00365"/>
    </source>
</evidence>
<comment type="function">
    <text evidence="1">The RecF protein is involved in DNA metabolism; it is required for DNA replication and normal SOS inducibility. RecF binds preferentially to single-stranded, linear DNA. It also seems to bind ATP.</text>
</comment>
<comment type="subcellular location">
    <subcellularLocation>
        <location evidence="1">Cytoplasm</location>
    </subcellularLocation>
</comment>
<comment type="similarity">
    <text evidence="1">Belongs to the RecF family.</text>
</comment>
<feature type="chain" id="PRO_0000236149" description="DNA replication and repair protein RecF">
    <location>
        <begin position="1"/>
        <end position="369"/>
    </location>
</feature>
<feature type="binding site" evidence="1">
    <location>
        <begin position="30"/>
        <end position="37"/>
    </location>
    <ligand>
        <name>ATP</name>
        <dbReference type="ChEBI" id="CHEBI:30616"/>
    </ligand>
</feature>
<dbReference type="EMBL" id="CP000114">
    <property type="protein sequence ID" value="ABA44832.1"/>
    <property type="molecule type" value="Genomic_DNA"/>
</dbReference>
<dbReference type="RefSeq" id="WP_000264870.1">
    <property type="nucleotide sequence ID" value="NC_007432.1"/>
</dbReference>
<dbReference type="SMR" id="Q3JYE9"/>
<dbReference type="KEGG" id="sak:SAK_2114"/>
<dbReference type="HOGENOM" id="CLU_040267_0_1_9"/>
<dbReference type="GO" id="GO:0005737">
    <property type="term" value="C:cytoplasm"/>
    <property type="evidence" value="ECO:0007669"/>
    <property type="project" value="UniProtKB-SubCell"/>
</dbReference>
<dbReference type="GO" id="GO:0005524">
    <property type="term" value="F:ATP binding"/>
    <property type="evidence" value="ECO:0007669"/>
    <property type="project" value="UniProtKB-UniRule"/>
</dbReference>
<dbReference type="GO" id="GO:0003697">
    <property type="term" value="F:single-stranded DNA binding"/>
    <property type="evidence" value="ECO:0007669"/>
    <property type="project" value="UniProtKB-UniRule"/>
</dbReference>
<dbReference type="GO" id="GO:0006260">
    <property type="term" value="P:DNA replication"/>
    <property type="evidence" value="ECO:0007669"/>
    <property type="project" value="UniProtKB-UniRule"/>
</dbReference>
<dbReference type="GO" id="GO:0000731">
    <property type="term" value="P:DNA synthesis involved in DNA repair"/>
    <property type="evidence" value="ECO:0007669"/>
    <property type="project" value="TreeGrafter"/>
</dbReference>
<dbReference type="GO" id="GO:0006302">
    <property type="term" value="P:double-strand break repair"/>
    <property type="evidence" value="ECO:0007669"/>
    <property type="project" value="TreeGrafter"/>
</dbReference>
<dbReference type="GO" id="GO:0009432">
    <property type="term" value="P:SOS response"/>
    <property type="evidence" value="ECO:0007669"/>
    <property type="project" value="UniProtKB-UniRule"/>
</dbReference>
<dbReference type="CDD" id="cd03242">
    <property type="entry name" value="ABC_RecF"/>
    <property type="match status" value="1"/>
</dbReference>
<dbReference type="FunFam" id="1.20.1050.90:FF:000002">
    <property type="entry name" value="DNA replication and repair protein RecF"/>
    <property type="match status" value="1"/>
</dbReference>
<dbReference type="Gene3D" id="3.40.50.300">
    <property type="entry name" value="P-loop containing nucleotide triphosphate hydrolases"/>
    <property type="match status" value="1"/>
</dbReference>
<dbReference type="Gene3D" id="1.20.1050.90">
    <property type="entry name" value="RecF/RecN/SMC, N-terminal domain"/>
    <property type="match status" value="1"/>
</dbReference>
<dbReference type="HAMAP" id="MF_00365">
    <property type="entry name" value="RecF"/>
    <property type="match status" value="1"/>
</dbReference>
<dbReference type="InterPro" id="IPR001238">
    <property type="entry name" value="DNA-binding_RecF"/>
</dbReference>
<dbReference type="InterPro" id="IPR018078">
    <property type="entry name" value="DNA-binding_RecF_CS"/>
</dbReference>
<dbReference type="InterPro" id="IPR027417">
    <property type="entry name" value="P-loop_NTPase"/>
</dbReference>
<dbReference type="InterPro" id="IPR003395">
    <property type="entry name" value="RecF/RecN/SMC_N"/>
</dbReference>
<dbReference type="InterPro" id="IPR042174">
    <property type="entry name" value="RecF_2"/>
</dbReference>
<dbReference type="NCBIfam" id="TIGR00611">
    <property type="entry name" value="recf"/>
    <property type="match status" value="1"/>
</dbReference>
<dbReference type="PANTHER" id="PTHR32182">
    <property type="entry name" value="DNA REPLICATION AND REPAIR PROTEIN RECF"/>
    <property type="match status" value="1"/>
</dbReference>
<dbReference type="PANTHER" id="PTHR32182:SF0">
    <property type="entry name" value="DNA REPLICATION AND REPAIR PROTEIN RECF"/>
    <property type="match status" value="1"/>
</dbReference>
<dbReference type="Pfam" id="PF02463">
    <property type="entry name" value="SMC_N"/>
    <property type="match status" value="1"/>
</dbReference>
<dbReference type="SUPFAM" id="SSF52540">
    <property type="entry name" value="P-loop containing nucleoside triphosphate hydrolases"/>
    <property type="match status" value="1"/>
</dbReference>
<dbReference type="PROSITE" id="PS00617">
    <property type="entry name" value="RECF_1"/>
    <property type="match status" value="1"/>
</dbReference>
<dbReference type="PROSITE" id="PS00618">
    <property type="entry name" value="RECF_2"/>
    <property type="match status" value="1"/>
</dbReference>
<name>RECF_STRA1</name>
<accession>Q3JYE9</accession>
<gene>
    <name evidence="1" type="primary">recF</name>
    <name type="ordered locus">SAK_2114</name>
</gene>
<protein>
    <recommendedName>
        <fullName evidence="1">DNA replication and repair protein RecF</fullName>
    </recommendedName>
</protein>
<keyword id="KW-0067">ATP-binding</keyword>
<keyword id="KW-0963">Cytoplasm</keyword>
<keyword id="KW-0227">DNA damage</keyword>
<keyword id="KW-0234">DNA repair</keyword>
<keyword id="KW-0235">DNA replication</keyword>
<keyword id="KW-0238">DNA-binding</keyword>
<keyword id="KW-0547">Nucleotide-binding</keyword>
<keyword id="KW-0742">SOS response</keyword>
<sequence length="369" mass="42471">MWIKNISLKHYRNYEEAQVDFSPNLNIFIGRNAQGKTNFLEAIYFLALTRSHRTRSDKELVHFKHHDVQITGEVIRKSGHLSLDIQLSEKGRITKVNHLKQAKLSDYIGAMTVVLFAPEDLQLVKGAPSLRRKFLDIDIGQIKPTYLAELSNYNHVLKQRNTYLKTTNNVDKTFLSVLDEQLADYGSRVIEHRFDFIQALNDEADKHHYIISTELEHLSIHYKSSIEFTDKSSIREHFLNQLSKSHSRDIFKKNTSIGPHRDDITFFINDINATFGSQGQQRSLILSLKLAEIELIKTVTNDYPILLLDDVMSELDNHRQLKLLEGIKENVQTFITTTSLEHLSALPDQLKIFNVSDGTISINEKKATD</sequence>
<reference key="1">
    <citation type="journal article" date="2005" name="Proc. Natl. Acad. Sci. U.S.A.">
        <title>Genome analysis of multiple pathogenic isolates of Streptococcus agalactiae: implications for the microbial 'pan-genome'.</title>
        <authorList>
            <person name="Tettelin H."/>
            <person name="Masignani V."/>
            <person name="Cieslewicz M.J."/>
            <person name="Donati C."/>
            <person name="Medini D."/>
            <person name="Ward N.L."/>
            <person name="Angiuoli S.V."/>
            <person name="Crabtree J."/>
            <person name="Jones A.L."/>
            <person name="Durkin A.S."/>
            <person name="DeBoy R.T."/>
            <person name="Davidsen T.M."/>
            <person name="Mora M."/>
            <person name="Scarselli M."/>
            <person name="Margarit y Ros I."/>
            <person name="Peterson J.D."/>
            <person name="Hauser C.R."/>
            <person name="Sundaram J.P."/>
            <person name="Nelson W.C."/>
            <person name="Madupu R."/>
            <person name="Brinkac L.M."/>
            <person name="Dodson R.J."/>
            <person name="Rosovitz M.J."/>
            <person name="Sullivan S.A."/>
            <person name="Daugherty S.C."/>
            <person name="Haft D.H."/>
            <person name="Selengut J."/>
            <person name="Gwinn M.L."/>
            <person name="Zhou L."/>
            <person name="Zafar N."/>
            <person name="Khouri H."/>
            <person name="Radune D."/>
            <person name="Dimitrov G."/>
            <person name="Watkins K."/>
            <person name="O'Connor K.J."/>
            <person name="Smith S."/>
            <person name="Utterback T.R."/>
            <person name="White O."/>
            <person name="Rubens C.E."/>
            <person name="Grandi G."/>
            <person name="Madoff L.C."/>
            <person name="Kasper D.L."/>
            <person name="Telford J.L."/>
            <person name="Wessels M.R."/>
            <person name="Rappuoli R."/>
            <person name="Fraser C.M."/>
        </authorList>
    </citation>
    <scope>NUCLEOTIDE SEQUENCE [LARGE SCALE GENOMIC DNA]</scope>
    <source>
        <strain>ATCC 27591 / A909 / CDC SS700</strain>
    </source>
</reference>
<organism>
    <name type="scientific">Streptococcus agalactiae serotype Ia (strain ATCC 27591 / A909 / CDC SS700)</name>
    <dbReference type="NCBI Taxonomy" id="205921"/>
    <lineage>
        <taxon>Bacteria</taxon>
        <taxon>Bacillati</taxon>
        <taxon>Bacillota</taxon>
        <taxon>Bacilli</taxon>
        <taxon>Lactobacillales</taxon>
        <taxon>Streptococcaceae</taxon>
        <taxon>Streptococcus</taxon>
    </lineage>
</organism>
<proteinExistence type="inferred from homology"/>